<keyword id="KW-1185">Reference proteome</keyword>
<reference key="1">
    <citation type="journal article" date="1998" name="Science">
        <title>Genome sequence of the nematode C. elegans: a platform for investigating biology.</title>
        <authorList>
            <consortium name="The C. elegans sequencing consortium"/>
        </authorList>
    </citation>
    <scope>NUCLEOTIDE SEQUENCE [LARGE SCALE GENOMIC DNA]</scope>
    <source>
        <strain>Bristol N2</strain>
    </source>
</reference>
<accession>Q09358</accession>
<name>YS03_CAEEL</name>
<evidence type="ECO:0000256" key="1">
    <source>
        <dbReference type="SAM" id="MobiDB-lite"/>
    </source>
</evidence>
<organism>
    <name type="scientific">Caenorhabditis elegans</name>
    <dbReference type="NCBI Taxonomy" id="6239"/>
    <lineage>
        <taxon>Eukaryota</taxon>
        <taxon>Metazoa</taxon>
        <taxon>Ecdysozoa</taxon>
        <taxon>Nematoda</taxon>
        <taxon>Chromadorea</taxon>
        <taxon>Rhabditida</taxon>
        <taxon>Rhabditina</taxon>
        <taxon>Rhabditomorpha</taxon>
        <taxon>Rhabditoidea</taxon>
        <taxon>Rhabditidae</taxon>
        <taxon>Peloderinae</taxon>
        <taxon>Caenorhabditis</taxon>
    </lineage>
</organism>
<proteinExistence type="predicted"/>
<dbReference type="EMBL" id="Z47357">
    <property type="protein sequence ID" value="CAA87422.1"/>
    <property type="molecule type" value="Genomic_DNA"/>
</dbReference>
<dbReference type="PIR" id="T27694">
    <property type="entry name" value="T27694"/>
</dbReference>
<dbReference type="RefSeq" id="NP_499248.1">
    <property type="nucleotide sequence ID" value="NM_066847.3"/>
</dbReference>
<dbReference type="SMR" id="Q09358"/>
<dbReference type="FunCoup" id="Q09358">
    <property type="interactions" value="41"/>
</dbReference>
<dbReference type="STRING" id="6239.ZK1128.3.1"/>
<dbReference type="PaxDb" id="6239-ZK1128.3"/>
<dbReference type="EnsemblMetazoa" id="ZK1128.3.1">
    <property type="protein sequence ID" value="ZK1128.3.1"/>
    <property type="gene ID" value="WBGene00014229"/>
</dbReference>
<dbReference type="GeneID" id="191527"/>
<dbReference type="KEGG" id="cel:CELE_ZK1128.3"/>
<dbReference type="UCSC" id="ZK1128.3">
    <property type="organism name" value="c. elegans"/>
</dbReference>
<dbReference type="AGR" id="WB:WBGene00014229"/>
<dbReference type="CTD" id="191527"/>
<dbReference type="WormBase" id="ZK1128.3">
    <property type="protein sequence ID" value="CE01685"/>
    <property type="gene ID" value="WBGene00014229"/>
</dbReference>
<dbReference type="eggNOG" id="ENOG502THBU">
    <property type="taxonomic scope" value="Eukaryota"/>
</dbReference>
<dbReference type="HOGENOM" id="CLU_829599_0_0_1"/>
<dbReference type="InParanoid" id="Q09358"/>
<dbReference type="OMA" id="MRRVYWN"/>
<dbReference type="OrthoDB" id="5812360at2759"/>
<dbReference type="PRO" id="PR:Q09358"/>
<dbReference type="Proteomes" id="UP000001940">
    <property type="component" value="Chromosome III"/>
</dbReference>
<dbReference type="Bgee" id="WBGene00014229">
    <property type="expression patterns" value="Expressed in adult organism and 1 other cell type or tissue"/>
</dbReference>
<feature type="chain" id="PRO_0000065561" description="Uncharacterized protein ZK1128.3">
    <location>
        <begin position="1"/>
        <end position="360"/>
    </location>
</feature>
<feature type="region of interest" description="Disordered" evidence="1">
    <location>
        <begin position="22"/>
        <end position="55"/>
    </location>
</feature>
<feature type="compositionally biased region" description="Acidic residues" evidence="1">
    <location>
        <begin position="22"/>
        <end position="32"/>
    </location>
</feature>
<feature type="compositionally biased region" description="Basic residues" evidence="1">
    <location>
        <begin position="37"/>
        <end position="50"/>
    </location>
</feature>
<gene>
    <name type="ORF">ZK1128.3</name>
</gene>
<protein>
    <recommendedName>
        <fullName>Uncharacterized protein ZK1128.3</fullName>
    </recommendedName>
</protein>
<sequence length="360" mass="42158">MSVHLTEGRRIIQYTGFDDIDEEDVEPNEEAEGPGGVHKKRRGARKKNRRQRMEGLENVDQTVDLQLVTVPKVVPFRASRLLQEIYDRERVHGMRRDEARQLLEDKLLFLEEKSLENLHLRRFCLVVPSDEHFQLDDGSKIPSEIVSISMENGKISSILRVFPSKTRSFEMESVENFQSHRMRRVYWNPSIPKDSNSMFRTWNHFLDGCLLSLLLVPLNKLTQVLEFLRKINEMRTVINNRITVSICLSRVICVEDYLSAVQKVMNTRTVQLDHIPSMDLPSLHFALDFSRYHIQSMNTIFTGSTEMDKLSDENSSHELVEFSSWSCHREAHINMEPEKYHRILHWLWDLSPVNPVDEAE</sequence>